<feature type="chain" id="PRO_1000202713" description="Peptide chain release factor 2">
    <location>
        <begin position="1"/>
        <end position="368"/>
    </location>
</feature>
<feature type="modified residue" description="N5-methylglutamine" evidence="1">
    <location>
        <position position="249"/>
    </location>
</feature>
<comment type="function">
    <text evidence="1">Peptide chain release factor 2 directs the termination of translation in response to the peptide chain termination codons UGA and UAA.</text>
</comment>
<comment type="subcellular location">
    <subcellularLocation>
        <location evidence="1">Cytoplasm</location>
    </subcellularLocation>
</comment>
<comment type="PTM">
    <text evidence="1">Methylated by PrmC. Methylation increases the termination efficiency of RF2.</text>
</comment>
<comment type="similarity">
    <text evidence="1">Belongs to the prokaryotic/mitochondrial release factor family.</text>
</comment>
<evidence type="ECO:0000255" key="1">
    <source>
        <dbReference type="HAMAP-Rule" id="MF_00094"/>
    </source>
</evidence>
<reference key="1">
    <citation type="submission" date="2005-03" db="EMBL/GenBank/DDBJ databases">
        <title>Comparison of the complete genome sequences of Rhodococcus erythropolis PR4 and Rhodococcus opacus B4.</title>
        <authorList>
            <person name="Takarada H."/>
            <person name="Sekine M."/>
            <person name="Hosoyama A."/>
            <person name="Yamada R."/>
            <person name="Fujisawa T."/>
            <person name="Omata S."/>
            <person name="Shimizu A."/>
            <person name="Tsukatani N."/>
            <person name="Tanikawa S."/>
            <person name="Fujita N."/>
            <person name="Harayama S."/>
        </authorList>
    </citation>
    <scope>NUCLEOTIDE SEQUENCE [LARGE SCALE GENOMIC DNA]</scope>
    <source>
        <strain>PR4 / NBRC 100887</strain>
    </source>
</reference>
<accession>C0ZXD0</accession>
<proteinExistence type="inferred from homology"/>
<keyword id="KW-0963">Cytoplasm</keyword>
<keyword id="KW-0488">Methylation</keyword>
<keyword id="KW-0648">Protein biosynthesis</keyword>
<protein>
    <recommendedName>
        <fullName evidence="1">Peptide chain release factor 2</fullName>
        <shortName evidence="1">RF-2</shortName>
    </recommendedName>
</protein>
<organism>
    <name type="scientific">Rhodococcus erythropolis (strain PR4 / NBRC 100887)</name>
    <dbReference type="NCBI Taxonomy" id="234621"/>
    <lineage>
        <taxon>Bacteria</taxon>
        <taxon>Bacillati</taxon>
        <taxon>Actinomycetota</taxon>
        <taxon>Actinomycetes</taxon>
        <taxon>Mycobacteriales</taxon>
        <taxon>Nocardiaceae</taxon>
        <taxon>Rhodococcus</taxon>
        <taxon>Rhodococcus erythropolis group</taxon>
    </lineage>
</organism>
<name>RF2_RHOE4</name>
<dbReference type="EMBL" id="AP008957">
    <property type="protein sequence ID" value="BAH33015.1"/>
    <property type="molecule type" value="Genomic_DNA"/>
</dbReference>
<dbReference type="RefSeq" id="WP_003942364.1">
    <property type="nucleotide sequence ID" value="NC_012490.1"/>
</dbReference>
<dbReference type="SMR" id="C0ZXD0"/>
<dbReference type="GeneID" id="93802926"/>
<dbReference type="KEGG" id="rer:RER_23070"/>
<dbReference type="eggNOG" id="COG1186">
    <property type="taxonomic scope" value="Bacteria"/>
</dbReference>
<dbReference type="HOGENOM" id="CLU_036856_6_0_11"/>
<dbReference type="Proteomes" id="UP000002204">
    <property type="component" value="Chromosome"/>
</dbReference>
<dbReference type="GO" id="GO:0005737">
    <property type="term" value="C:cytoplasm"/>
    <property type="evidence" value="ECO:0007669"/>
    <property type="project" value="UniProtKB-SubCell"/>
</dbReference>
<dbReference type="GO" id="GO:0016149">
    <property type="term" value="F:translation release factor activity, codon specific"/>
    <property type="evidence" value="ECO:0007669"/>
    <property type="project" value="UniProtKB-UniRule"/>
</dbReference>
<dbReference type="FunFam" id="3.30.160.20:FF:000010">
    <property type="entry name" value="Peptide chain release factor 2"/>
    <property type="match status" value="1"/>
</dbReference>
<dbReference type="Gene3D" id="3.30.160.20">
    <property type="match status" value="1"/>
</dbReference>
<dbReference type="Gene3D" id="3.30.70.1660">
    <property type="match status" value="1"/>
</dbReference>
<dbReference type="Gene3D" id="1.20.58.410">
    <property type="entry name" value="Release factor"/>
    <property type="match status" value="1"/>
</dbReference>
<dbReference type="HAMAP" id="MF_00094">
    <property type="entry name" value="Rel_fac_2"/>
    <property type="match status" value="1"/>
</dbReference>
<dbReference type="InterPro" id="IPR005139">
    <property type="entry name" value="PCRF"/>
</dbReference>
<dbReference type="InterPro" id="IPR000352">
    <property type="entry name" value="Pep_chain_release_fac_I"/>
</dbReference>
<dbReference type="InterPro" id="IPR045853">
    <property type="entry name" value="Pep_chain_release_fac_I_sf"/>
</dbReference>
<dbReference type="InterPro" id="IPR004374">
    <property type="entry name" value="PrfB"/>
</dbReference>
<dbReference type="NCBIfam" id="TIGR00020">
    <property type="entry name" value="prfB"/>
    <property type="match status" value="1"/>
</dbReference>
<dbReference type="PANTHER" id="PTHR43116:SF3">
    <property type="entry name" value="CLASS I PEPTIDE CHAIN RELEASE FACTOR"/>
    <property type="match status" value="1"/>
</dbReference>
<dbReference type="PANTHER" id="PTHR43116">
    <property type="entry name" value="PEPTIDE CHAIN RELEASE FACTOR 2"/>
    <property type="match status" value="1"/>
</dbReference>
<dbReference type="Pfam" id="PF03462">
    <property type="entry name" value="PCRF"/>
    <property type="match status" value="1"/>
</dbReference>
<dbReference type="Pfam" id="PF00472">
    <property type="entry name" value="RF-1"/>
    <property type="match status" value="1"/>
</dbReference>
<dbReference type="SMART" id="SM00937">
    <property type="entry name" value="PCRF"/>
    <property type="match status" value="1"/>
</dbReference>
<dbReference type="SUPFAM" id="SSF75620">
    <property type="entry name" value="Release factor"/>
    <property type="match status" value="1"/>
</dbReference>
<dbReference type="PROSITE" id="PS00745">
    <property type="entry name" value="RF_PROK_I"/>
    <property type="match status" value="1"/>
</dbReference>
<sequence length="368" mass="41245">MHPDVIADLNALDTTLRTCESVVDVEELRRRIDELEHQAADPGLWNDQEHAQQVTSQLSHAQAELRRIVALRERLDEMPILYELAEDEGPDAVADADAERASLRDDIAAMEVKTMLSGEYDERDALINIRSGAGGIDAADWAEMLMRMYIRWAEKHDYGVEVYDTSYAEEAGLKSATFAIKGPYTYGTLSVEMGTHRLVRISPFDNQGRRQTSFAEVEVLPVVETTDHIEINENDIRVDVYRSSGPGGQSVNTTDSAVRLTHIPTGIVVTCQNEKSQLQNKVSAMRVLQAKLLAVKRQEERAEMDALKGDSGSSWGNQMRSYVLHPYQMVKDLRTEYEVNNPSAVLDGDIDGFLEAGIRWRMSENQSA</sequence>
<gene>
    <name evidence="1" type="primary">prfB</name>
    <name type="ordered locus">RER_23070</name>
</gene>